<protein>
    <recommendedName>
        <fullName evidence="1">2,3-bisphosphoglycerate-dependent phosphoglycerate mutase</fullName>
        <shortName evidence="1">BPG-dependent PGAM</shortName>
        <shortName evidence="1">PGAM</shortName>
        <shortName evidence="1">Phosphoglyceromutase</shortName>
        <shortName evidence="1">dPGM</shortName>
        <ecNumber evidence="1">5.4.2.11</ecNumber>
    </recommendedName>
</protein>
<feature type="chain" id="PRO_1000149516" description="2,3-bisphosphoglycerate-dependent phosphoglycerate mutase">
    <location>
        <begin position="1"/>
        <end position="212"/>
    </location>
</feature>
<feature type="active site" description="Tele-phosphohistidine intermediate" evidence="1">
    <location>
        <position position="10"/>
    </location>
</feature>
<feature type="active site" description="Proton donor/acceptor" evidence="1">
    <location>
        <position position="88"/>
    </location>
</feature>
<feature type="binding site" evidence="1">
    <location>
        <begin position="9"/>
        <end position="16"/>
    </location>
    <ligand>
        <name>substrate</name>
    </ligand>
</feature>
<feature type="binding site" evidence="1">
    <location>
        <begin position="22"/>
        <end position="23"/>
    </location>
    <ligand>
        <name>substrate</name>
    </ligand>
</feature>
<feature type="binding site" evidence="1">
    <location>
        <position position="61"/>
    </location>
    <ligand>
        <name>substrate</name>
    </ligand>
</feature>
<feature type="binding site" evidence="1">
    <location>
        <begin position="88"/>
        <end position="91"/>
    </location>
    <ligand>
        <name>substrate</name>
    </ligand>
</feature>
<feature type="binding site" evidence="1">
    <location>
        <position position="99"/>
    </location>
    <ligand>
        <name>substrate</name>
    </ligand>
</feature>
<feature type="binding site" evidence="1">
    <location>
        <begin position="115"/>
        <end position="116"/>
    </location>
    <ligand>
        <name>substrate</name>
    </ligand>
</feature>
<feature type="binding site" evidence="1">
    <location>
        <begin position="159"/>
        <end position="160"/>
    </location>
    <ligand>
        <name>substrate</name>
    </ligand>
</feature>
<feature type="site" description="Transition state stabilizer" evidence="1">
    <location>
        <position position="158"/>
    </location>
</feature>
<dbReference type="EC" id="5.4.2.11" evidence="1"/>
<dbReference type="EMBL" id="CP001298">
    <property type="protein sequence ID" value="ACK83568.1"/>
    <property type="molecule type" value="Genomic_DNA"/>
</dbReference>
<dbReference type="RefSeq" id="WP_003598075.1">
    <property type="nucleotide sequence ID" value="NC_011757.1"/>
</dbReference>
<dbReference type="SMR" id="B7KNX9"/>
<dbReference type="GeneID" id="72990137"/>
<dbReference type="KEGG" id="mch:Mchl_2729"/>
<dbReference type="HOGENOM" id="CLU_033323_1_4_5"/>
<dbReference type="UniPathway" id="UPA00109">
    <property type="reaction ID" value="UER00186"/>
</dbReference>
<dbReference type="Proteomes" id="UP000002385">
    <property type="component" value="Chromosome"/>
</dbReference>
<dbReference type="GO" id="GO:0004619">
    <property type="term" value="F:phosphoglycerate mutase activity"/>
    <property type="evidence" value="ECO:0007669"/>
    <property type="project" value="UniProtKB-EC"/>
</dbReference>
<dbReference type="GO" id="GO:0006094">
    <property type="term" value="P:gluconeogenesis"/>
    <property type="evidence" value="ECO:0007669"/>
    <property type="project" value="UniProtKB-UniRule"/>
</dbReference>
<dbReference type="GO" id="GO:0006096">
    <property type="term" value="P:glycolytic process"/>
    <property type="evidence" value="ECO:0007669"/>
    <property type="project" value="UniProtKB-UniRule"/>
</dbReference>
<dbReference type="CDD" id="cd07067">
    <property type="entry name" value="HP_PGM_like"/>
    <property type="match status" value="1"/>
</dbReference>
<dbReference type="Gene3D" id="3.40.50.1240">
    <property type="entry name" value="Phosphoglycerate mutase-like"/>
    <property type="match status" value="1"/>
</dbReference>
<dbReference type="HAMAP" id="MF_01039">
    <property type="entry name" value="PGAM_GpmA"/>
    <property type="match status" value="1"/>
</dbReference>
<dbReference type="InterPro" id="IPR013078">
    <property type="entry name" value="His_Pase_superF_clade-1"/>
</dbReference>
<dbReference type="InterPro" id="IPR029033">
    <property type="entry name" value="His_PPase_superfam"/>
</dbReference>
<dbReference type="InterPro" id="IPR001345">
    <property type="entry name" value="PG/BPGM_mutase_AS"/>
</dbReference>
<dbReference type="InterPro" id="IPR005952">
    <property type="entry name" value="Phosphogly_mut1"/>
</dbReference>
<dbReference type="NCBIfam" id="TIGR01258">
    <property type="entry name" value="pgm_1"/>
    <property type="match status" value="2"/>
</dbReference>
<dbReference type="NCBIfam" id="NF002339">
    <property type="entry name" value="PRK01295.1"/>
    <property type="match status" value="1"/>
</dbReference>
<dbReference type="PANTHER" id="PTHR11931">
    <property type="entry name" value="PHOSPHOGLYCERATE MUTASE"/>
    <property type="match status" value="1"/>
</dbReference>
<dbReference type="Pfam" id="PF00300">
    <property type="entry name" value="His_Phos_1"/>
    <property type="match status" value="1"/>
</dbReference>
<dbReference type="PIRSF" id="PIRSF000709">
    <property type="entry name" value="6PFK_2-Ptase"/>
    <property type="match status" value="1"/>
</dbReference>
<dbReference type="SMART" id="SM00855">
    <property type="entry name" value="PGAM"/>
    <property type="match status" value="1"/>
</dbReference>
<dbReference type="SUPFAM" id="SSF53254">
    <property type="entry name" value="Phosphoglycerate mutase-like"/>
    <property type="match status" value="1"/>
</dbReference>
<dbReference type="PROSITE" id="PS00175">
    <property type="entry name" value="PG_MUTASE"/>
    <property type="match status" value="1"/>
</dbReference>
<reference key="1">
    <citation type="submission" date="2008-12" db="EMBL/GenBank/DDBJ databases">
        <title>Complete sequence of chromosome of Methylobacterium chloromethanicum CM4.</title>
        <authorList>
            <consortium name="US DOE Joint Genome Institute"/>
            <person name="Lucas S."/>
            <person name="Copeland A."/>
            <person name="Lapidus A."/>
            <person name="Glavina del Rio T."/>
            <person name="Dalin E."/>
            <person name="Tice H."/>
            <person name="Bruce D."/>
            <person name="Goodwin L."/>
            <person name="Pitluck S."/>
            <person name="Chertkov O."/>
            <person name="Brettin T."/>
            <person name="Detter J.C."/>
            <person name="Han C."/>
            <person name="Larimer F."/>
            <person name="Land M."/>
            <person name="Hauser L."/>
            <person name="Kyrpides N."/>
            <person name="Mikhailova N."/>
            <person name="Marx C."/>
            <person name="Richardson P."/>
        </authorList>
    </citation>
    <scope>NUCLEOTIDE SEQUENCE [LARGE SCALE GENOMIC DNA]</scope>
    <source>
        <strain>CM4 / NCIMB 13688</strain>
    </source>
</reference>
<keyword id="KW-0312">Gluconeogenesis</keyword>
<keyword id="KW-0324">Glycolysis</keyword>
<keyword id="KW-0413">Isomerase</keyword>
<accession>B7KNX9</accession>
<evidence type="ECO:0000255" key="1">
    <source>
        <dbReference type="HAMAP-Rule" id="MF_01039"/>
    </source>
</evidence>
<organism>
    <name type="scientific">Methylorubrum extorquens (strain CM4 / NCIMB 13688)</name>
    <name type="common">Methylobacterium extorquens</name>
    <dbReference type="NCBI Taxonomy" id="440085"/>
    <lineage>
        <taxon>Bacteria</taxon>
        <taxon>Pseudomonadati</taxon>
        <taxon>Pseudomonadota</taxon>
        <taxon>Alphaproteobacteria</taxon>
        <taxon>Hyphomicrobiales</taxon>
        <taxon>Methylobacteriaceae</taxon>
        <taxon>Methylorubrum</taxon>
    </lineage>
</organism>
<sequence length="212" mass="23878">MERLLVLARHGQSEWNLKKLFTGWRDPELTELGIDEARRAGRWLKSQGTQFDVAFTSNLRRAQHTCSLILEEMGQGGLETIRNEALNERDYGDLSGLNKDDARERWGDAQVHEWRRSYDVPPPGGESLKDTAARVLPYYIQTILPRVMSGERVLVAAHGNSLRALVMVLDGMTTKTIASLEIATGIPLVYRLKADTTVESKTVLDKDIDQDD</sequence>
<proteinExistence type="inferred from homology"/>
<gene>
    <name evidence="1" type="primary">gpmA</name>
    <name type="ordered locus">Mchl_2729</name>
</gene>
<comment type="function">
    <text evidence="1">Catalyzes the interconversion of 2-phosphoglycerate and 3-phosphoglycerate.</text>
</comment>
<comment type="catalytic activity">
    <reaction evidence="1">
        <text>(2R)-2-phosphoglycerate = (2R)-3-phosphoglycerate</text>
        <dbReference type="Rhea" id="RHEA:15901"/>
        <dbReference type="ChEBI" id="CHEBI:58272"/>
        <dbReference type="ChEBI" id="CHEBI:58289"/>
        <dbReference type="EC" id="5.4.2.11"/>
    </reaction>
</comment>
<comment type="pathway">
    <text evidence="1">Carbohydrate degradation; glycolysis; pyruvate from D-glyceraldehyde 3-phosphate: step 3/5.</text>
</comment>
<comment type="subunit">
    <text evidence="1">Homodimer.</text>
</comment>
<comment type="similarity">
    <text evidence="1">Belongs to the phosphoglycerate mutase family. BPG-dependent PGAM subfamily.</text>
</comment>
<name>GPMA_METC4</name>